<gene>
    <name type="primary">DPP4</name>
</gene>
<comment type="function">
    <text evidence="1">Extracellular dipeptidyl-peptidase which removes N-terminal dipeptides sequentially from polypeptides having unsubstituted N-termini provided that the penultimate residue is proline. Contributes to pathogenicity (By similarity).</text>
</comment>
<comment type="catalytic activity">
    <reaction evidence="3">
        <text>Release of an N-terminal dipeptide, Xaa-Yaa-|-Zaa-, from a polypeptide, preferentially when Yaa is Pro, provided Zaa is neither Pro nor hydroxyproline.</text>
        <dbReference type="EC" id="3.4.14.5"/>
    </reaction>
</comment>
<comment type="subcellular location">
    <subcellularLocation>
        <location evidence="1">Secreted</location>
    </subcellularLocation>
</comment>
<comment type="similarity">
    <text evidence="4">Belongs to the peptidase S9B family.</text>
</comment>
<reference key="1">
    <citation type="submission" date="2008-10" db="EMBL/GenBank/DDBJ databases">
        <title>Comparing putative pathogenicity factors between Trichophyton tonsurans and Trichophyton equinum.</title>
        <authorList>
            <person name="Preuett B.L."/>
            <person name="Abdel-Rahman S.M."/>
        </authorList>
    </citation>
    <scope>NUCLEOTIDE SEQUENCE [GENOMIC DNA]</scope>
</reference>
<sequence>MKLLSLLMLAGIAQAIVPPREPRPPTGGGNKLLTYKECVPRATISPRSTSLAWINSDEDGQYISQSDDGALILQNIVTNTNKTLVAADKVPKGYYDYWFKPDLSAVLWATNYTKQYRHSYFANYFILDIEKGSLTPLAQDQAGDIQYAQWSPVDNSIAYVRGNDLYIWNNGTTKRITENGGPDIFNGVPDWVYEEEIFGDRFALWFSPDGEYLAYLRFNETGVPTYTIPYYKNKQKIAPAYPRELEIRYPKVSAKNPTVQFHLLNIASSQESTIPVTAFPENDLVIGEVAWLSSGHDSVAYRAFNRVQDREKIVSIKVESKESKVIRERDGTDGWIDNLLSMSYIGDVNGKEYYVDISDASGWAHIYLYPVDGGKEIALTKGEWEVVAILKVDTKKKLIYFTSTKYHSTTRHVYSVSYDTNVMTPLVNDKEAAYYTASFSAKGGYYILSYQGPNVPYQELYSTKDSKKPLKTITSNDALLEKLKEYKLPMVSFFEIKLPSGETLNVKQRLPPNFNPHKKYPVLFTPYGGPGAQEVSQAWNSLDFKSYITSDPELEYVTWTVDNRGTGYKGRKFRSAVAKRLGFLEAQDQVFAAKELLKNRWADKDHIGIWGWSYGGFLTAKTLETDSGVFTFGISTAPVSDFRLYDSMYTERYMKTVELNADGYSETAVHKVDGFKNLKGHYLIQHGTGDDNVHFQNAAVLSNTLMNGGVTADKLTTQWFTDSDHGIRYDMDSTYQYKQLAKMVYDQKQRRPERPPMHQWSKRVLAALFGERAEE</sequence>
<name>DPP4_TRITO</name>
<accession>B6V868</accession>
<keyword id="KW-0031">Aminopeptidase</keyword>
<keyword id="KW-0325">Glycoprotein</keyword>
<keyword id="KW-0378">Hydrolase</keyword>
<keyword id="KW-0645">Protease</keyword>
<keyword id="KW-0964">Secreted</keyword>
<keyword id="KW-0720">Serine protease</keyword>
<keyword id="KW-0732">Signal</keyword>
<keyword id="KW-0843">Virulence</keyword>
<dbReference type="EC" id="3.4.14.5"/>
<dbReference type="EMBL" id="FJ267691">
    <property type="protein sequence ID" value="ACJ06659.1"/>
    <property type="molecule type" value="Genomic_DNA"/>
</dbReference>
<dbReference type="SMR" id="B6V868"/>
<dbReference type="ESTHER" id="artbc-dpp4">
    <property type="family name" value="DPP4N_Peptidase_S9"/>
</dbReference>
<dbReference type="MEROPS" id="S09.008"/>
<dbReference type="GlyCosmos" id="B6V868">
    <property type="glycosylation" value="4 sites, No reported glycans"/>
</dbReference>
<dbReference type="VEuPathDB" id="FungiDB:TESG_06398"/>
<dbReference type="GO" id="GO:0005576">
    <property type="term" value="C:extracellular region"/>
    <property type="evidence" value="ECO:0007669"/>
    <property type="project" value="UniProtKB-SubCell"/>
</dbReference>
<dbReference type="GO" id="GO:0005886">
    <property type="term" value="C:plasma membrane"/>
    <property type="evidence" value="ECO:0007669"/>
    <property type="project" value="TreeGrafter"/>
</dbReference>
<dbReference type="GO" id="GO:0004177">
    <property type="term" value="F:aminopeptidase activity"/>
    <property type="evidence" value="ECO:0007669"/>
    <property type="project" value="UniProtKB-KW"/>
</dbReference>
<dbReference type="GO" id="GO:0008239">
    <property type="term" value="F:dipeptidyl-peptidase activity"/>
    <property type="evidence" value="ECO:0007669"/>
    <property type="project" value="UniProtKB-EC"/>
</dbReference>
<dbReference type="GO" id="GO:0004252">
    <property type="term" value="F:serine-type endopeptidase activity"/>
    <property type="evidence" value="ECO:0007669"/>
    <property type="project" value="InterPro"/>
</dbReference>
<dbReference type="GO" id="GO:0006508">
    <property type="term" value="P:proteolysis"/>
    <property type="evidence" value="ECO:0007669"/>
    <property type="project" value="UniProtKB-KW"/>
</dbReference>
<dbReference type="FunFam" id="3.40.50.1820:FF:000003">
    <property type="entry name" value="Dipeptidyl peptidase 4"/>
    <property type="match status" value="1"/>
</dbReference>
<dbReference type="FunFam" id="2.140.10.30:FF:000003">
    <property type="entry name" value="Probable dipeptidyl peptidase 4"/>
    <property type="match status" value="1"/>
</dbReference>
<dbReference type="Gene3D" id="3.40.50.1820">
    <property type="entry name" value="alpha/beta hydrolase"/>
    <property type="match status" value="1"/>
</dbReference>
<dbReference type="Gene3D" id="2.140.10.30">
    <property type="entry name" value="Dipeptidylpeptidase IV, N-terminal domain"/>
    <property type="match status" value="1"/>
</dbReference>
<dbReference type="InterPro" id="IPR029058">
    <property type="entry name" value="AB_hydrolase_fold"/>
</dbReference>
<dbReference type="InterPro" id="IPR002471">
    <property type="entry name" value="Pept_S9_AS"/>
</dbReference>
<dbReference type="InterPro" id="IPR001375">
    <property type="entry name" value="Peptidase_S9_cat"/>
</dbReference>
<dbReference type="InterPro" id="IPR002469">
    <property type="entry name" value="Peptidase_S9B_N"/>
</dbReference>
<dbReference type="InterPro" id="IPR050278">
    <property type="entry name" value="Serine_Prot_S9B/DPPIV"/>
</dbReference>
<dbReference type="PANTHER" id="PTHR11731:SF162">
    <property type="entry name" value="DIPEPTIDYL PEPTIDASE 4-RELATED"/>
    <property type="match status" value="1"/>
</dbReference>
<dbReference type="PANTHER" id="PTHR11731">
    <property type="entry name" value="PROTEASE FAMILY S9B,C DIPEPTIDYL-PEPTIDASE IV-RELATED"/>
    <property type="match status" value="1"/>
</dbReference>
<dbReference type="Pfam" id="PF00930">
    <property type="entry name" value="DPPIV_N"/>
    <property type="match status" value="1"/>
</dbReference>
<dbReference type="Pfam" id="PF00326">
    <property type="entry name" value="Peptidase_S9"/>
    <property type="match status" value="1"/>
</dbReference>
<dbReference type="SUPFAM" id="SSF53474">
    <property type="entry name" value="alpha/beta-Hydrolases"/>
    <property type="match status" value="1"/>
</dbReference>
<dbReference type="SUPFAM" id="SSF82171">
    <property type="entry name" value="DPP6 N-terminal domain-like"/>
    <property type="match status" value="1"/>
</dbReference>
<dbReference type="PROSITE" id="PS00708">
    <property type="entry name" value="PRO_ENDOPEP_SER"/>
    <property type="match status" value="1"/>
</dbReference>
<organism>
    <name type="scientific">Trichophyton tonsurans</name>
    <name type="common">Scalp ringworm fungus</name>
    <dbReference type="NCBI Taxonomy" id="34387"/>
    <lineage>
        <taxon>Eukaryota</taxon>
        <taxon>Fungi</taxon>
        <taxon>Dikarya</taxon>
        <taxon>Ascomycota</taxon>
        <taxon>Pezizomycotina</taxon>
        <taxon>Eurotiomycetes</taxon>
        <taxon>Eurotiomycetidae</taxon>
        <taxon>Onygenales</taxon>
        <taxon>Arthrodermataceae</taxon>
        <taxon>Trichophyton</taxon>
    </lineage>
</organism>
<proteinExistence type="inferred from homology"/>
<feature type="signal peptide" evidence="2">
    <location>
        <begin position="1"/>
        <end position="15"/>
    </location>
</feature>
<feature type="chain" id="PRO_0000384090" description="Dipeptidyl peptidase 4">
    <location>
        <begin position="16"/>
        <end position="775"/>
    </location>
</feature>
<feature type="active site" description="Charge relay system" evidence="3">
    <location>
        <position position="613"/>
    </location>
</feature>
<feature type="active site" description="Charge relay system" evidence="3">
    <location>
        <position position="690"/>
    </location>
</feature>
<feature type="active site" description="Charge relay system" evidence="3">
    <location>
        <position position="725"/>
    </location>
</feature>
<feature type="glycosylation site" description="N-linked (GlcNAc...) asparagine" evidence="2">
    <location>
        <position position="81"/>
    </location>
</feature>
<feature type="glycosylation site" description="N-linked (GlcNAc...) asparagine" evidence="2">
    <location>
        <position position="111"/>
    </location>
</feature>
<feature type="glycosylation site" description="N-linked (GlcNAc...) asparagine" evidence="2">
    <location>
        <position position="170"/>
    </location>
</feature>
<feature type="glycosylation site" description="N-linked (GlcNAc...) asparagine" evidence="2">
    <location>
        <position position="219"/>
    </location>
</feature>
<protein>
    <recommendedName>
        <fullName>Dipeptidyl peptidase 4</fullName>
        <ecNumber>3.4.14.5</ecNumber>
    </recommendedName>
    <alternativeName>
        <fullName>Dipeptidyl peptidase IV</fullName>
        <shortName>DPP IV</shortName>
        <shortName>DppIV</shortName>
    </alternativeName>
</protein>
<evidence type="ECO:0000250" key="1"/>
<evidence type="ECO:0000255" key="2"/>
<evidence type="ECO:0000255" key="3">
    <source>
        <dbReference type="PROSITE-ProRule" id="PRU10084"/>
    </source>
</evidence>
<evidence type="ECO:0000305" key="4"/>